<proteinExistence type="inferred from homology"/>
<sequence length="99" mass="11492">MASKRIIRMSDLLHTTPVFNRGYRFQWEQAQQSYVILYPEGLVRLNESATLILKQIDGKLTVHDIIQNLSAQFPDATGLDQDIVEFLKQAESRQWICLQ</sequence>
<name>PQQD_ACIAD</name>
<keyword id="KW-0884">PQQ biosynthesis</keyword>
<evidence type="ECO:0000255" key="1">
    <source>
        <dbReference type="HAMAP-Rule" id="MF_00655"/>
    </source>
</evidence>
<gene>
    <name evidence="1" type="primary">pqqD</name>
    <name type="ordered locus">ACIAD2506</name>
</gene>
<organism>
    <name type="scientific">Acinetobacter baylyi (strain ATCC 33305 / BD413 / ADP1)</name>
    <dbReference type="NCBI Taxonomy" id="62977"/>
    <lineage>
        <taxon>Bacteria</taxon>
        <taxon>Pseudomonadati</taxon>
        <taxon>Pseudomonadota</taxon>
        <taxon>Gammaproteobacteria</taxon>
        <taxon>Moraxellales</taxon>
        <taxon>Moraxellaceae</taxon>
        <taxon>Acinetobacter</taxon>
    </lineage>
</organism>
<reference key="1">
    <citation type="journal article" date="2004" name="Nucleic Acids Res.">
        <title>Unique features revealed by the genome sequence of Acinetobacter sp. ADP1, a versatile and naturally transformation competent bacterium.</title>
        <authorList>
            <person name="Barbe V."/>
            <person name="Vallenet D."/>
            <person name="Fonknechten N."/>
            <person name="Kreimeyer A."/>
            <person name="Oztas S."/>
            <person name="Labarre L."/>
            <person name="Cruveiller S."/>
            <person name="Robert C."/>
            <person name="Duprat S."/>
            <person name="Wincker P."/>
            <person name="Ornston L.N."/>
            <person name="Weissenbach J."/>
            <person name="Marliere P."/>
            <person name="Cohen G.N."/>
            <person name="Medigue C."/>
        </authorList>
    </citation>
    <scope>NUCLEOTIDE SEQUENCE [LARGE SCALE GENOMIC DNA]</scope>
    <source>
        <strain>ATCC 33305 / BD413 / ADP1</strain>
    </source>
</reference>
<comment type="function">
    <text evidence="1">Functions as a PqqA binding protein and presents PqqA to PqqE, in the pyrroloquinoline quinone (PQQ) biosynthetic pathway.</text>
</comment>
<comment type="pathway">
    <text evidence="1">Cofactor biosynthesis; pyrroloquinoline quinone biosynthesis.</text>
</comment>
<comment type="subunit">
    <text evidence="1">Monomer. Interacts with PqqE.</text>
</comment>
<comment type="similarity">
    <text evidence="1">Belongs to the PqqD family.</text>
</comment>
<accession>Q6F9J0</accession>
<protein>
    <recommendedName>
        <fullName evidence="1">PqqA binding protein</fullName>
    </recommendedName>
    <alternativeName>
        <fullName evidence="1">Coenzyme PQQ synthesis protein D</fullName>
    </alternativeName>
    <alternativeName>
        <fullName evidence="1">Pyrroloquinoline quinone biosynthesis protein D</fullName>
    </alternativeName>
</protein>
<dbReference type="EMBL" id="CR543861">
    <property type="protein sequence ID" value="CAG69274.1"/>
    <property type="molecule type" value="Genomic_DNA"/>
</dbReference>
<dbReference type="SMR" id="Q6F9J0"/>
<dbReference type="STRING" id="202950.GCA_001485005_01508"/>
<dbReference type="KEGG" id="aci:ACIAD2506"/>
<dbReference type="eggNOG" id="ENOG5032Z81">
    <property type="taxonomic scope" value="Bacteria"/>
</dbReference>
<dbReference type="HOGENOM" id="CLU_163864_2_1_6"/>
<dbReference type="UniPathway" id="UPA00539"/>
<dbReference type="Proteomes" id="UP000000430">
    <property type="component" value="Chromosome"/>
</dbReference>
<dbReference type="GO" id="GO:0048038">
    <property type="term" value="F:quinone binding"/>
    <property type="evidence" value="ECO:0007669"/>
    <property type="project" value="InterPro"/>
</dbReference>
<dbReference type="GO" id="GO:0018189">
    <property type="term" value="P:pyrroloquinoline quinone biosynthetic process"/>
    <property type="evidence" value="ECO:0007669"/>
    <property type="project" value="UniProtKB-UniRule"/>
</dbReference>
<dbReference type="Gene3D" id="1.10.10.1150">
    <property type="entry name" value="Coenzyme PQQ synthesis protein D (PqqD)"/>
    <property type="match status" value="1"/>
</dbReference>
<dbReference type="HAMAP" id="MF_00655">
    <property type="entry name" value="PQQ_syn_PqqD"/>
    <property type="match status" value="1"/>
</dbReference>
<dbReference type="InterPro" id="IPR008792">
    <property type="entry name" value="PQQD"/>
</dbReference>
<dbReference type="InterPro" id="IPR022479">
    <property type="entry name" value="PqqD_bac"/>
</dbReference>
<dbReference type="InterPro" id="IPR041881">
    <property type="entry name" value="PqqD_sf"/>
</dbReference>
<dbReference type="NCBIfam" id="TIGR03859">
    <property type="entry name" value="PQQ_PqqD"/>
    <property type="match status" value="1"/>
</dbReference>
<dbReference type="NCBIfam" id="NF002535">
    <property type="entry name" value="PRK02079.1"/>
    <property type="match status" value="1"/>
</dbReference>
<dbReference type="Pfam" id="PF05402">
    <property type="entry name" value="PqqD"/>
    <property type="match status" value="1"/>
</dbReference>
<feature type="chain" id="PRO_0000219958" description="PqqA binding protein">
    <location>
        <begin position="1"/>
        <end position="99"/>
    </location>
</feature>